<name>UVRC_BACLD</name>
<organism>
    <name type="scientific">Bacillus licheniformis (strain ATCC 14580 / DSM 13 / JCM 2505 / CCUG 7422 / NBRC 12200 / NCIMB 9375 / NCTC 10341 / NRRL NRS-1264 / Gibson 46)</name>
    <dbReference type="NCBI Taxonomy" id="279010"/>
    <lineage>
        <taxon>Bacteria</taxon>
        <taxon>Bacillati</taxon>
        <taxon>Bacillota</taxon>
        <taxon>Bacilli</taxon>
        <taxon>Bacillales</taxon>
        <taxon>Bacillaceae</taxon>
        <taxon>Bacillus</taxon>
    </lineage>
</organism>
<proteinExistence type="inferred from homology"/>
<dbReference type="EMBL" id="AE017333">
    <property type="protein sequence ID" value="AAU41864.1"/>
    <property type="molecule type" value="Genomic_DNA"/>
</dbReference>
<dbReference type="EMBL" id="CP000002">
    <property type="protein sequence ID" value="AAU24504.1"/>
    <property type="molecule type" value="Genomic_DNA"/>
</dbReference>
<dbReference type="RefSeq" id="WP_011198178.1">
    <property type="nucleotide sequence ID" value="NC_006322.1"/>
</dbReference>
<dbReference type="SMR" id="Q65GF0"/>
<dbReference type="STRING" id="279010.BL00325"/>
<dbReference type="GeneID" id="92860411"/>
<dbReference type="KEGG" id="bld:BLi02997"/>
<dbReference type="KEGG" id="bli:BL00325"/>
<dbReference type="PATRIC" id="fig|279010.13.peg.3058"/>
<dbReference type="eggNOG" id="COG0322">
    <property type="taxonomic scope" value="Bacteria"/>
</dbReference>
<dbReference type="HOGENOM" id="CLU_014841_3_2_9"/>
<dbReference type="Proteomes" id="UP000000606">
    <property type="component" value="Chromosome"/>
</dbReference>
<dbReference type="GO" id="GO:0005737">
    <property type="term" value="C:cytoplasm"/>
    <property type="evidence" value="ECO:0007669"/>
    <property type="project" value="UniProtKB-SubCell"/>
</dbReference>
<dbReference type="GO" id="GO:0009380">
    <property type="term" value="C:excinuclease repair complex"/>
    <property type="evidence" value="ECO:0007669"/>
    <property type="project" value="InterPro"/>
</dbReference>
<dbReference type="GO" id="GO:0003677">
    <property type="term" value="F:DNA binding"/>
    <property type="evidence" value="ECO:0007669"/>
    <property type="project" value="UniProtKB-UniRule"/>
</dbReference>
<dbReference type="GO" id="GO:0009381">
    <property type="term" value="F:excinuclease ABC activity"/>
    <property type="evidence" value="ECO:0007669"/>
    <property type="project" value="UniProtKB-UniRule"/>
</dbReference>
<dbReference type="GO" id="GO:0006289">
    <property type="term" value="P:nucleotide-excision repair"/>
    <property type="evidence" value="ECO:0007669"/>
    <property type="project" value="UniProtKB-UniRule"/>
</dbReference>
<dbReference type="GO" id="GO:0009432">
    <property type="term" value="P:SOS response"/>
    <property type="evidence" value="ECO:0007669"/>
    <property type="project" value="UniProtKB-UniRule"/>
</dbReference>
<dbReference type="CDD" id="cd10434">
    <property type="entry name" value="GIY-YIG_UvrC_Cho"/>
    <property type="match status" value="1"/>
</dbReference>
<dbReference type="FunFam" id="3.30.420.340:FF:000002">
    <property type="entry name" value="UvrABC system protein C"/>
    <property type="match status" value="1"/>
</dbReference>
<dbReference type="FunFam" id="3.40.1440.10:FF:000001">
    <property type="entry name" value="UvrABC system protein C"/>
    <property type="match status" value="1"/>
</dbReference>
<dbReference type="FunFam" id="4.10.860.10:FF:000002">
    <property type="entry name" value="UvrABC system protein C"/>
    <property type="match status" value="1"/>
</dbReference>
<dbReference type="Gene3D" id="1.10.150.20">
    <property type="entry name" value="5' to 3' exonuclease, C-terminal subdomain"/>
    <property type="match status" value="1"/>
</dbReference>
<dbReference type="Gene3D" id="3.40.1440.10">
    <property type="entry name" value="GIY-YIG endonuclease"/>
    <property type="match status" value="1"/>
</dbReference>
<dbReference type="Gene3D" id="4.10.860.10">
    <property type="entry name" value="UVR domain"/>
    <property type="match status" value="1"/>
</dbReference>
<dbReference type="Gene3D" id="3.30.420.340">
    <property type="entry name" value="UvrC, RNAse H endonuclease domain"/>
    <property type="match status" value="1"/>
</dbReference>
<dbReference type="HAMAP" id="MF_00203">
    <property type="entry name" value="UvrC"/>
    <property type="match status" value="1"/>
</dbReference>
<dbReference type="InterPro" id="IPR000305">
    <property type="entry name" value="GIY-YIG_endonuc"/>
</dbReference>
<dbReference type="InterPro" id="IPR035901">
    <property type="entry name" value="GIY-YIG_endonuc_sf"/>
</dbReference>
<dbReference type="InterPro" id="IPR047296">
    <property type="entry name" value="GIY-YIG_UvrC_Cho"/>
</dbReference>
<dbReference type="InterPro" id="IPR010994">
    <property type="entry name" value="RuvA_2-like"/>
</dbReference>
<dbReference type="InterPro" id="IPR001943">
    <property type="entry name" value="UVR_dom"/>
</dbReference>
<dbReference type="InterPro" id="IPR036876">
    <property type="entry name" value="UVR_dom_sf"/>
</dbReference>
<dbReference type="InterPro" id="IPR050066">
    <property type="entry name" value="UvrABC_protein_C"/>
</dbReference>
<dbReference type="InterPro" id="IPR004791">
    <property type="entry name" value="UvrC"/>
</dbReference>
<dbReference type="InterPro" id="IPR001162">
    <property type="entry name" value="UvrC_RNase_H_dom"/>
</dbReference>
<dbReference type="InterPro" id="IPR038476">
    <property type="entry name" value="UvrC_RNase_H_dom_sf"/>
</dbReference>
<dbReference type="NCBIfam" id="NF001824">
    <property type="entry name" value="PRK00558.1-5"/>
    <property type="match status" value="1"/>
</dbReference>
<dbReference type="NCBIfam" id="TIGR00194">
    <property type="entry name" value="uvrC"/>
    <property type="match status" value="1"/>
</dbReference>
<dbReference type="PANTHER" id="PTHR30562:SF1">
    <property type="entry name" value="UVRABC SYSTEM PROTEIN C"/>
    <property type="match status" value="1"/>
</dbReference>
<dbReference type="PANTHER" id="PTHR30562">
    <property type="entry name" value="UVRC/OXIDOREDUCTASE"/>
    <property type="match status" value="1"/>
</dbReference>
<dbReference type="Pfam" id="PF01541">
    <property type="entry name" value="GIY-YIG"/>
    <property type="match status" value="1"/>
</dbReference>
<dbReference type="Pfam" id="PF14520">
    <property type="entry name" value="HHH_5"/>
    <property type="match status" value="1"/>
</dbReference>
<dbReference type="Pfam" id="PF02151">
    <property type="entry name" value="UVR"/>
    <property type="match status" value="1"/>
</dbReference>
<dbReference type="Pfam" id="PF22920">
    <property type="entry name" value="UvrC_RNaseH"/>
    <property type="match status" value="1"/>
</dbReference>
<dbReference type="Pfam" id="PF08459">
    <property type="entry name" value="UvrC_RNaseH_dom"/>
    <property type="match status" value="1"/>
</dbReference>
<dbReference type="SMART" id="SM00465">
    <property type="entry name" value="GIYc"/>
    <property type="match status" value="1"/>
</dbReference>
<dbReference type="SUPFAM" id="SSF46600">
    <property type="entry name" value="C-terminal UvrC-binding domain of UvrB"/>
    <property type="match status" value="1"/>
</dbReference>
<dbReference type="SUPFAM" id="SSF82771">
    <property type="entry name" value="GIY-YIG endonuclease"/>
    <property type="match status" value="1"/>
</dbReference>
<dbReference type="SUPFAM" id="SSF47781">
    <property type="entry name" value="RuvA domain 2-like"/>
    <property type="match status" value="1"/>
</dbReference>
<dbReference type="PROSITE" id="PS50164">
    <property type="entry name" value="GIY_YIG"/>
    <property type="match status" value="1"/>
</dbReference>
<dbReference type="PROSITE" id="PS50151">
    <property type="entry name" value="UVR"/>
    <property type="match status" value="1"/>
</dbReference>
<dbReference type="PROSITE" id="PS50165">
    <property type="entry name" value="UVRC"/>
    <property type="match status" value="1"/>
</dbReference>
<feature type="chain" id="PRO_0000227398" description="UvrABC system protein C">
    <location>
        <begin position="1"/>
        <end position="590"/>
    </location>
</feature>
<feature type="domain" description="GIY-YIG" evidence="1">
    <location>
        <begin position="14"/>
        <end position="91"/>
    </location>
</feature>
<feature type="domain" description="UVR" evidence="1">
    <location>
        <begin position="196"/>
        <end position="231"/>
    </location>
</feature>
<reference key="1">
    <citation type="journal article" date="2004" name="J. Mol. Microbiol. Biotechnol.">
        <title>The complete genome sequence of Bacillus licheniformis DSM13, an organism with great industrial potential.</title>
        <authorList>
            <person name="Veith B."/>
            <person name="Herzberg C."/>
            <person name="Steckel S."/>
            <person name="Feesche J."/>
            <person name="Maurer K.H."/>
            <person name="Ehrenreich P."/>
            <person name="Baeumer S."/>
            <person name="Henne A."/>
            <person name="Liesegang H."/>
            <person name="Merkl R."/>
            <person name="Ehrenreich A."/>
            <person name="Gottschalk G."/>
        </authorList>
    </citation>
    <scope>NUCLEOTIDE SEQUENCE [LARGE SCALE GENOMIC DNA]</scope>
    <source>
        <strain>ATCC 14580 / DSM 13 / JCM 2505 / CCUG 7422 / NBRC 12200 / NCIMB 9375 / NCTC 10341 / NRRL NRS-1264 / Gibson 46</strain>
    </source>
</reference>
<reference key="2">
    <citation type="journal article" date="2004" name="Genome Biol.">
        <title>Complete genome sequence of the industrial bacterium Bacillus licheniformis and comparisons with closely related Bacillus species.</title>
        <authorList>
            <person name="Rey M.W."/>
            <person name="Ramaiya P."/>
            <person name="Nelson B.A."/>
            <person name="Brody-Karpin S.D."/>
            <person name="Zaretsky E.J."/>
            <person name="Tang M."/>
            <person name="Lopez de Leon A."/>
            <person name="Xiang H."/>
            <person name="Gusti V."/>
            <person name="Clausen I.G."/>
            <person name="Olsen P.B."/>
            <person name="Rasmussen M.D."/>
            <person name="Andersen J.T."/>
            <person name="Joergensen P.L."/>
            <person name="Larsen T.S."/>
            <person name="Sorokin A."/>
            <person name="Bolotin A."/>
            <person name="Lapidus A."/>
            <person name="Galleron N."/>
            <person name="Ehrlich S.D."/>
            <person name="Berka R.M."/>
        </authorList>
    </citation>
    <scope>NUCLEOTIDE SEQUENCE [LARGE SCALE GENOMIC DNA]</scope>
    <source>
        <strain>ATCC 14580 / DSM 13 / JCM 2505 / CCUG 7422 / NBRC 12200 / NCIMB 9375 / NCTC 10341 / NRRL NRS-1264 / Gibson 46</strain>
    </source>
</reference>
<gene>
    <name evidence="1" type="primary">uvrC</name>
    <name type="ordered locus">BLi02997</name>
    <name type="ordered locus">BL00325</name>
</gene>
<comment type="function">
    <text evidence="1">The UvrABC repair system catalyzes the recognition and processing of DNA lesions. UvrC both incises the 5' and 3' sides of the lesion. The N-terminal half is responsible for the 3' incision and the C-terminal half is responsible for the 5' incision.</text>
</comment>
<comment type="subunit">
    <text evidence="1">Interacts with UvrB in an incision complex.</text>
</comment>
<comment type="subcellular location">
    <subcellularLocation>
        <location evidence="1">Cytoplasm</location>
    </subcellularLocation>
</comment>
<comment type="similarity">
    <text evidence="1">Belongs to the UvrC family.</text>
</comment>
<sequence>MNKKIKEKLALLPDQPGCYLMKDRQDTVIYVGKAKILKNRVRSYFSGSHDAKTQRLVSEIEDFEYIVTSSNIEALILEMNLIKKYDPKYNVMLKDDKSYPFIKITNERHPKLVVTRKVKKDKGRYFGPYPNVQAARETKKLLDRLYPLRKCAKLPDRVCLYYHLGQCLAPCVYDVSEETNRQLTEEITRFLKGGYNEVKKELEAKMLEASENLQFERAKEFRDQIAHIESTMEKQKMMLNDMVDRDVFAYSYDKGWMCVQVFFIRQGKLIERDVSMFPLYREADEEFLTFIGQFYSKNNHFLPKEILVPDSVDKDMIEELLDVNVRQPKRGAKKDLLLLAHKNAKLALKEKFSLIERDEERTIGAIEKLGKALDIYTPYRIEAFDNSNIQGTDPVSAMVVFLDGKPHKKEYRKYKIKTVEGPDDYGSMREVIRRRYTRVLKENLPLPDLILIDGGKGQVSAALDVLENELGLDVPVAGLVKDDKHRTSNLLIGDPLEIVQLERNSQEFYLLQRIQDEVHRFAISFHRQLRGKSAFQSVLDGIPGVGEQRKKLLLKHFGSVKKMKEASAEDIRKLGIPLKTAQLIEEALKK</sequence>
<accession>Q65GF0</accession>
<accession>Q62RV6</accession>
<protein>
    <recommendedName>
        <fullName evidence="1">UvrABC system protein C</fullName>
        <shortName evidence="1">Protein UvrC</shortName>
    </recommendedName>
    <alternativeName>
        <fullName evidence="1">Excinuclease ABC subunit C</fullName>
    </alternativeName>
</protein>
<evidence type="ECO:0000255" key="1">
    <source>
        <dbReference type="HAMAP-Rule" id="MF_00203"/>
    </source>
</evidence>
<keyword id="KW-0963">Cytoplasm</keyword>
<keyword id="KW-0227">DNA damage</keyword>
<keyword id="KW-0228">DNA excision</keyword>
<keyword id="KW-0234">DNA repair</keyword>
<keyword id="KW-0267">Excision nuclease</keyword>
<keyword id="KW-1185">Reference proteome</keyword>
<keyword id="KW-0742">SOS response</keyword>